<comment type="catalytic activity">
    <reaction evidence="1">
        <text>tRNA(Phe) + L-phenylalanine + ATP = L-phenylalanyl-tRNA(Phe) + AMP + diphosphate + H(+)</text>
        <dbReference type="Rhea" id="RHEA:19413"/>
        <dbReference type="Rhea" id="RHEA-COMP:9668"/>
        <dbReference type="Rhea" id="RHEA-COMP:9699"/>
        <dbReference type="ChEBI" id="CHEBI:15378"/>
        <dbReference type="ChEBI" id="CHEBI:30616"/>
        <dbReference type="ChEBI" id="CHEBI:33019"/>
        <dbReference type="ChEBI" id="CHEBI:58095"/>
        <dbReference type="ChEBI" id="CHEBI:78442"/>
        <dbReference type="ChEBI" id="CHEBI:78531"/>
        <dbReference type="ChEBI" id="CHEBI:456215"/>
        <dbReference type="EC" id="6.1.1.20"/>
    </reaction>
</comment>
<comment type="cofactor">
    <cofactor evidence="1">
        <name>Mg(2+)</name>
        <dbReference type="ChEBI" id="CHEBI:18420"/>
    </cofactor>
</comment>
<comment type="subunit">
    <text evidence="1">Tetramer of two alpha and two beta subunits.</text>
</comment>
<comment type="subcellular location">
    <subcellularLocation>
        <location evidence="1">Cytoplasm</location>
    </subcellularLocation>
</comment>
<comment type="similarity">
    <text evidence="1 2">Belongs to the phenylalanyl-tRNA synthetase beta subunit family. Type 2 subfamily.</text>
</comment>
<reference key="1">
    <citation type="journal article" date="1999" name="DNA Res.">
        <title>Complete genome sequence of an aerobic hyper-thermophilic crenarchaeon, Aeropyrum pernix K1.</title>
        <authorList>
            <person name="Kawarabayasi Y."/>
            <person name="Hino Y."/>
            <person name="Horikawa H."/>
            <person name="Yamazaki S."/>
            <person name="Haikawa Y."/>
            <person name="Jin-no K."/>
            <person name="Takahashi M."/>
            <person name="Sekine M."/>
            <person name="Baba S."/>
            <person name="Ankai A."/>
            <person name="Kosugi H."/>
            <person name="Hosoyama A."/>
            <person name="Fukui S."/>
            <person name="Nagai Y."/>
            <person name="Nishijima K."/>
            <person name="Nakazawa H."/>
            <person name="Takamiya M."/>
            <person name="Masuda S."/>
            <person name="Funahashi T."/>
            <person name="Tanaka T."/>
            <person name="Kudoh Y."/>
            <person name="Yamazaki J."/>
            <person name="Kushida N."/>
            <person name="Oguchi A."/>
            <person name="Aoki K."/>
            <person name="Kubota K."/>
            <person name="Nakamura Y."/>
            <person name="Nomura N."/>
            <person name="Sako Y."/>
            <person name="Kikuchi H."/>
        </authorList>
    </citation>
    <scope>NUCLEOTIDE SEQUENCE [LARGE SCALE GENOMIC DNA]</scope>
    <source>
        <strain>ATCC 700893 / DSM 11879 / JCM 9820 / NBRC 100138 / K1</strain>
    </source>
</reference>
<accession>Q9Y9I3</accession>
<keyword id="KW-0030">Aminoacyl-tRNA synthetase</keyword>
<keyword id="KW-0067">ATP-binding</keyword>
<keyword id="KW-0963">Cytoplasm</keyword>
<keyword id="KW-0436">Ligase</keyword>
<keyword id="KW-0460">Magnesium</keyword>
<keyword id="KW-0479">Metal-binding</keyword>
<keyword id="KW-0547">Nucleotide-binding</keyword>
<keyword id="KW-0648">Protein biosynthesis</keyword>
<keyword id="KW-1185">Reference proteome</keyword>
<proteinExistence type="inferred from homology"/>
<sequence>MPVIRVRRERLESLTGLSIGELEELLFRLKCEVEEPEEGVLEVEVNPDRPDMYIGEGIARAVKGIAGVEEGWDPPELADTPLSLRVERVPQRPYIAAAVVYGVNVDELFLEELIQFQEKLHDSLGRRRAKIAIGFHDLAKLPSASVEYRLMTLDTRMKPLGYGGSEMSFREFLLADEKGSLYGGLATKDNSHPFLLSGGEVIAAPPVINSEITRVEPGTRDLFIDVTGTSAELVAKTLDIIVASLAEREGARVGRVRLEGPGAVWASTPLLSEAAAKLDPGTVSKALGVDLTPEEAALHLRRMRHNASPAGGLVNVRVPPFRVDILGEVDLVEDIAISIGYEALGPRWPGKFHGGSLRWETHVYRAVKDLLVGLGFTEVLQLVLTSPRLVEAAGFSSMAVEVLNPVQQEYSVLRPTLLITLLQTLRENQHRRKPVKVFEAGNAVYLEDGEPRDEEKLALGVLDEEAGFEDVQAPLYAVLRIMGVDFEVEEASHPMFMEGRTAAVKVGGERLGYIGEVKPEVLEAFGLEYPVAAAEISLEVLARWTSRT</sequence>
<gene>
    <name evidence="1" type="primary">pheT</name>
    <name type="ordered locus">APE_2305</name>
</gene>
<organism>
    <name type="scientific">Aeropyrum pernix (strain ATCC 700893 / DSM 11879 / JCM 9820 / NBRC 100138 / K1)</name>
    <dbReference type="NCBI Taxonomy" id="272557"/>
    <lineage>
        <taxon>Archaea</taxon>
        <taxon>Thermoproteota</taxon>
        <taxon>Thermoprotei</taxon>
        <taxon>Desulfurococcales</taxon>
        <taxon>Desulfurococcaceae</taxon>
        <taxon>Aeropyrum</taxon>
    </lineage>
</organism>
<protein>
    <recommendedName>
        <fullName evidence="1">Phenylalanine--tRNA ligase beta subunit</fullName>
        <ecNumber evidence="1">6.1.1.20</ecNumber>
    </recommendedName>
    <alternativeName>
        <fullName evidence="1">Phenylalanyl-tRNA synthetase beta subunit</fullName>
        <shortName evidence="1">PheRS</shortName>
    </alternativeName>
</protein>
<dbReference type="EC" id="6.1.1.20" evidence="1"/>
<dbReference type="EMBL" id="BA000002">
    <property type="protein sequence ID" value="BAA81317.1"/>
    <property type="molecule type" value="Genomic_DNA"/>
</dbReference>
<dbReference type="PIR" id="E72457">
    <property type="entry name" value="E72457"/>
</dbReference>
<dbReference type="RefSeq" id="WP_010866926.1">
    <property type="nucleotide sequence ID" value="NC_000854.2"/>
</dbReference>
<dbReference type="SMR" id="Q9Y9I3"/>
<dbReference type="STRING" id="272557.APE_2305"/>
<dbReference type="DNASU" id="1445334"/>
<dbReference type="EnsemblBacteria" id="BAA81317">
    <property type="protein sequence ID" value="BAA81317"/>
    <property type="gene ID" value="APE_2305"/>
</dbReference>
<dbReference type="GeneID" id="1445334"/>
<dbReference type="KEGG" id="ape:APE_2305"/>
<dbReference type="PATRIC" id="fig|272557.25.peg.1536"/>
<dbReference type="eggNOG" id="arCOG00412">
    <property type="taxonomic scope" value="Archaea"/>
</dbReference>
<dbReference type="BRENDA" id="6.1.1.20">
    <property type="organism ID" value="171"/>
</dbReference>
<dbReference type="Proteomes" id="UP000002518">
    <property type="component" value="Chromosome"/>
</dbReference>
<dbReference type="GO" id="GO:0009328">
    <property type="term" value="C:phenylalanine-tRNA ligase complex"/>
    <property type="evidence" value="ECO:0007669"/>
    <property type="project" value="TreeGrafter"/>
</dbReference>
<dbReference type="GO" id="GO:0005524">
    <property type="term" value="F:ATP binding"/>
    <property type="evidence" value="ECO:0007669"/>
    <property type="project" value="UniProtKB-UniRule"/>
</dbReference>
<dbReference type="GO" id="GO:0000287">
    <property type="term" value="F:magnesium ion binding"/>
    <property type="evidence" value="ECO:0007669"/>
    <property type="project" value="InterPro"/>
</dbReference>
<dbReference type="GO" id="GO:0004826">
    <property type="term" value="F:phenylalanine-tRNA ligase activity"/>
    <property type="evidence" value="ECO:0007669"/>
    <property type="project" value="UniProtKB-UniRule"/>
</dbReference>
<dbReference type="GO" id="GO:0003723">
    <property type="term" value="F:RNA binding"/>
    <property type="evidence" value="ECO:0007669"/>
    <property type="project" value="InterPro"/>
</dbReference>
<dbReference type="GO" id="GO:0006432">
    <property type="term" value="P:phenylalanyl-tRNA aminoacylation"/>
    <property type="evidence" value="ECO:0007669"/>
    <property type="project" value="UniProtKB-UniRule"/>
</dbReference>
<dbReference type="CDD" id="cd00769">
    <property type="entry name" value="PheRS_beta_core"/>
    <property type="match status" value="1"/>
</dbReference>
<dbReference type="Gene3D" id="3.30.56.10">
    <property type="match status" value="2"/>
</dbReference>
<dbReference type="Gene3D" id="3.30.930.10">
    <property type="entry name" value="Bira Bifunctional Protein, Domain 2"/>
    <property type="match status" value="1"/>
</dbReference>
<dbReference type="Gene3D" id="3.50.40.10">
    <property type="entry name" value="Phenylalanyl-trna Synthetase, Chain B, domain 3"/>
    <property type="match status" value="1"/>
</dbReference>
<dbReference type="HAMAP" id="MF_00284">
    <property type="entry name" value="Phe_tRNA_synth_beta2"/>
    <property type="match status" value="1"/>
</dbReference>
<dbReference type="InterPro" id="IPR045864">
    <property type="entry name" value="aa-tRNA-synth_II/BPL/LPL"/>
</dbReference>
<dbReference type="InterPro" id="IPR005146">
    <property type="entry name" value="B3/B4_tRNA-bd"/>
</dbReference>
<dbReference type="InterPro" id="IPR009061">
    <property type="entry name" value="DNA-bd_dom_put_sf"/>
</dbReference>
<dbReference type="InterPro" id="IPR045060">
    <property type="entry name" value="Phe-tRNA-ligase_IIc_bsu"/>
</dbReference>
<dbReference type="InterPro" id="IPR004531">
    <property type="entry name" value="Phe-tRNA-synth_IIc_bsu_arc_euk"/>
</dbReference>
<dbReference type="InterPro" id="IPR020825">
    <property type="entry name" value="Phe-tRNA_synthase-like_B3/B4"/>
</dbReference>
<dbReference type="InterPro" id="IPR022918">
    <property type="entry name" value="Phe_tRNA_ligase_beta2_arc"/>
</dbReference>
<dbReference type="InterPro" id="IPR041616">
    <property type="entry name" value="PheRS_beta_core"/>
</dbReference>
<dbReference type="InterPro" id="IPR005147">
    <property type="entry name" value="tRNA_synthase_B5-dom"/>
</dbReference>
<dbReference type="NCBIfam" id="TIGR00471">
    <property type="entry name" value="pheT_arch"/>
    <property type="match status" value="1"/>
</dbReference>
<dbReference type="PANTHER" id="PTHR10947:SF0">
    <property type="entry name" value="PHENYLALANINE--TRNA LIGASE BETA SUBUNIT"/>
    <property type="match status" value="1"/>
</dbReference>
<dbReference type="PANTHER" id="PTHR10947">
    <property type="entry name" value="PHENYLALANYL-TRNA SYNTHETASE BETA CHAIN AND LEUCINE-RICH REPEAT-CONTAINING PROTEIN 47"/>
    <property type="match status" value="1"/>
</dbReference>
<dbReference type="Pfam" id="PF03484">
    <property type="entry name" value="B5"/>
    <property type="match status" value="1"/>
</dbReference>
<dbReference type="Pfam" id="PF17759">
    <property type="entry name" value="tRNA_synthFbeta"/>
    <property type="match status" value="1"/>
</dbReference>
<dbReference type="SMART" id="SM00873">
    <property type="entry name" value="B3_4"/>
    <property type="match status" value="1"/>
</dbReference>
<dbReference type="SMART" id="SM00874">
    <property type="entry name" value="B5"/>
    <property type="match status" value="2"/>
</dbReference>
<dbReference type="SUPFAM" id="SSF55681">
    <property type="entry name" value="Class II aaRS and biotin synthetases"/>
    <property type="match status" value="1"/>
</dbReference>
<dbReference type="SUPFAM" id="SSF46955">
    <property type="entry name" value="Putative DNA-binding domain"/>
    <property type="match status" value="2"/>
</dbReference>
<dbReference type="PROSITE" id="PS51483">
    <property type="entry name" value="B5"/>
    <property type="match status" value="1"/>
</dbReference>
<feature type="chain" id="PRO_0000126998" description="Phenylalanine--tRNA ligase beta subunit">
    <location>
        <begin position="1"/>
        <end position="548"/>
    </location>
</feature>
<feature type="domain" description="B5" evidence="1">
    <location>
        <begin position="271"/>
        <end position="346"/>
    </location>
</feature>
<feature type="binding site" evidence="1">
    <location>
        <position position="324"/>
    </location>
    <ligand>
        <name>Mg(2+)</name>
        <dbReference type="ChEBI" id="CHEBI:18420"/>
        <note>shared with alpha subunit</note>
    </ligand>
</feature>
<feature type="binding site" evidence="1">
    <location>
        <position position="330"/>
    </location>
    <ligand>
        <name>Mg(2+)</name>
        <dbReference type="ChEBI" id="CHEBI:18420"/>
        <note>shared with alpha subunit</note>
    </ligand>
</feature>
<feature type="binding site" evidence="1">
    <location>
        <position position="333"/>
    </location>
    <ligand>
        <name>Mg(2+)</name>
        <dbReference type="ChEBI" id="CHEBI:18420"/>
        <note>shared with alpha subunit</note>
    </ligand>
</feature>
<feature type="binding site" evidence="1">
    <location>
        <position position="334"/>
    </location>
    <ligand>
        <name>Mg(2+)</name>
        <dbReference type="ChEBI" id="CHEBI:18420"/>
        <note>shared with alpha subunit</note>
    </ligand>
</feature>
<evidence type="ECO:0000255" key="1">
    <source>
        <dbReference type="HAMAP-Rule" id="MF_00284"/>
    </source>
</evidence>
<evidence type="ECO:0000305" key="2"/>
<name>SYFB_AERPE</name>